<comment type="function">
    <text evidence="1">Catalyzes the acyloin condensation reaction between C atoms 2 and 3 of pyruvate and glyceraldehyde 3-phosphate to yield 1-deoxy-D-xylulose-5-phosphate (DXP).</text>
</comment>
<comment type="catalytic activity">
    <reaction evidence="1">
        <text>D-glyceraldehyde 3-phosphate + pyruvate + H(+) = 1-deoxy-D-xylulose 5-phosphate + CO2</text>
        <dbReference type="Rhea" id="RHEA:12605"/>
        <dbReference type="ChEBI" id="CHEBI:15361"/>
        <dbReference type="ChEBI" id="CHEBI:15378"/>
        <dbReference type="ChEBI" id="CHEBI:16526"/>
        <dbReference type="ChEBI" id="CHEBI:57792"/>
        <dbReference type="ChEBI" id="CHEBI:59776"/>
        <dbReference type="EC" id="2.2.1.7"/>
    </reaction>
</comment>
<comment type="cofactor">
    <cofactor evidence="1">
        <name>Mg(2+)</name>
        <dbReference type="ChEBI" id="CHEBI:18420"/>
    </cofactor>
    <text evidence="1">Binds 1 Mg(2+) ion per subunit.</text>
</comment>
<comment type="cofactor">
    <cofactor evidence="1">
        <name>thiamine diphosphate</name>
        <dbReference type="ChEBI" id="CHEBI:58937"/>
    </cofactor>
    <text evidence="1">Binds 1 thiamine pyrophosphate per subunit.</text>
</comment>
<comment type="pathway">
    <text evidence="1">Metabolic intermediate biosynthesis; 1-deoxy-D-xylulose 5-phosphate biosynthesis; 1-deoxy-D-xylulose 5-phosphate from D-glyceraldehyde 3-phosphate and pyruvate: step 1/1.</text>
</comment>
<comment type="subunit">
    <text evidence="1">Homodimer.</text>
</comment>
<comment type="similarity">
    <text evidence="1">Belongs to the transketolase family. DXPS subfamily.</text>
</comment>
<proteinExistence type="inferred from homology"/>
<protein>
    <recommendedName>
        <fullName evidence="1">1-deoxy-D-xylulose-5-phosphate synthase</fullName>
        <ecNumber evidence="1">2.2.1.7</ecNumber>
    </recommendedName>
    <alternativeName>
        <fullName evidence="1">1-deoxyxylulose-5-phosphate synthase</fullName>
        <shortName evidence="1">DXP synthase</shortName>
        <shortName evidence="1">DXPS</shortName>
    </alternativeName>
</protein>
<evidence type="ECO:0000255" key="1">
    <source>
        <dbReference type="HAMAP-Rule" id="MF_00315"/>
    </source>
</evidence>
<keyword id="KW-0414">Isoprene biosynthesis</keyword>
<keyword id="KW-0460">Magnesium</keyword>
<keyword id="KW-0479">Metal-binding</keyword>
<keyword id="KW-1185">Reference proteome</keyword>
<keyword id="KW-0784">Thiamine biosynthesis</keyword>
<keyword id="KW-0786">Thiamine pyrophosphate</keyword>
<keyword id="KW-0808">Transferase</keyword>
<name>DXS_PASMU</name>
<feature type="chain" id="PRO_0000189136" description="1-deoxy-D-xylulose-5-phosphate synthase">
    <location>
        <begin position="1"/>
        <end position="614"/>
    </location>
</feature>
<feature type="binding site" evidence="1">
    <location>
        <position position="76"/>
    </location>
    <ligand>
        <name>thiamine diphosphate</name>
        <dbReference type="ChEBI" id="CHEBI:58937"/>
    </ligand>
</feature>
<feature type="binding site" evidence="1">
    <location>
        <begin position="117"/>
        <end position="119"/>
    </location>
    <ligand>
        <name>thiamine diphosphate</name>
        <dbReference type="ChEBI" id="CHEBI:58937"/>
    </ligand>
</feature>
<feature type="binding site" evidence="1">
    <location>
        <position position="148"/>
    </location>
    <ligand>
        <name>Mg(2+)</name>
        <dbReference type="ChEBI" id="CHEBI:18420"/>
    </ligand>
</feature>
<feature type="binding site" evidence="1">
    <location>
        <begin position="149"/>
        <end position="150"/>
    </location>
    <ligand>
        <name>thiamine diphosphate</name>
        <dbReference type="ChEBI" id="CHEBI:58937"/>
    </ligand>
</feature>
<feature type="binding site" evidence="1">
    <location>
        <position position="177"/>
    </location>
    <ligand>
        <name>Mg(2+)</name>
        <dbReference type="ChEBI" id="CHEBI:18420"/>
    </ligand>
</feature>
<feature type="binding site" evidence="1">
    <location>
        <position position="177"/>
    </location>
    <ligand>
        <name>thiamine diphosphate</name>
        <dbReference type="ChEBI" id="CHEBI:58937"/>
    </ligand>
</feature>
<feature type="binding site" evidence="1">
    <location>
        <position position="285"/>
    </location>
    <ligand>
        <name>thiamine diphosphate</name>
        <dbReference type="ChEBI" id="CHEBI:58937"/>
    </ligand>
</feature>
<feature type="binding site" evidence="1">
    <location>
        <position position="366"/>
    </location>
    <ligand>
        <name>thiamine diphosphate</name>
        <dbReference type="ChEBI" id="CHEBI:58937"/>
    </ligand>
</feature>
<accession>P57848</accession>
<dbReference type="EC" id="2.2.1.7" evidence="1"/>
<dbReference type="EMBL" id="AE004439">
    <property type="protein sequence ID" value="AAK02616.1"/>
    <property type="molecule type" value="Genomic_DNA"/>
</dbReference>
<dbReference type="RefSeq" id="WP_005751407.1">
    <property type="nucleotide sequence ID" value="NC_002663.1"/>
</dbReference>
<dbReference type="SMR" id="P57848"/>
<dbReference type="STRING" id="272843.PM0532"/>
<dbReference type="EnsemblBacteria" id="AAK02616">
    <property type="protein sequence ID" value="AAK02616"/>
    <property type="gene ID" value="PM0532"/>
</dbReference>
<dbReference type="KEGG" id="pmu:PM0532"/>
<dbReference type="PATRIC" id="fig|272843.6.peg.539"/>
<dbReference type="HOGENOM" id="CLU_009227_1_4_6"/>
<dbReference type="OrthoDB" id="9803371at2"/>
<dbReference type="UniPathway" id="UPA00064">
    <property type="reaction ID" value="UER00091"/>
</dbReference>
<dbReference type="Proteomes" id="UP000000809">
    <property type="component" value="Chromosome"/>
</dbReference>
<dbReference type="GO" id="GO:0005829">
    <property type="term" value="C:cytosol"/>
    <property type="evidence" value="ECO:0007669"/>
    <property type="project" value="TreeGrafter"/>
</dbReference>
<dbReference type="GO" id="GO:0008661">
    <property type="term" value="F:1-deoxy-D-xylulose-5-phosphate synthase activity"/>
    <property type="evidence" value="ECO:0007669"/>
    <property type="project" value="UniProtKB-UniRule"/>
</dbReference>
<dbReference type="GO" id="GO:0000287">
    <property type="term" value="F:magnesium ion binding"/>
    <property type="evidence" value="ECO:0007669"/>
    <property type="project" value="UniProtKB-UniRule"/>
</dbReference>
<dbReference type="GO" id="GO:0030976">
    <property type="term" value="F:thiamine pyrophosphate binding"/>
    <property type="evidence" value="ECO:0007669"/>
    <property type="project" value="UniProtKB-UniRule"/>
</dbReference>
<dbReference type="GO" id="GO:0052865">
    <property type="term" value="P:1-deoxy-D-xylulose 5-phosphate biosynthetic process"/>
    <property type="evidence" value="ECO:0007669"/>
    <property type="project" value="UniProtKB-UniPathway"/>
</dbReference>
<dbReference type="GO" id="GO:0019288">
    <property type="term" value="P:isopentenyl diphosphate biosynthetic process, methylerythritol 4-phosphate pathway"/>
    <property type="evidence" value="ECO:0007669"/>
    <property type="project" value="TreeGrafter"/>
</dbReference>
<dbReference type="GO" id="GO:0016114">
    <property type="term" value="P:terpenoid biosynthetic process"/>
    <property type="evidence" value="ECO:0007669"/>
    <property type="project" value="UniProtKB-UniRule"/>
</dbReference>
<dbReference type="GO" id="GO:0009228">
    <property type="term" value="P:thiamine biosynthetic process"/>
    <property type="evidence" value="ECO:0007669"/>
    <property type="project" value="UniProtKB-UniRule"/>
</dbReference>
<dbReference type="CDD" id="cd02007">
    <property type="entry name" value="TPP_DXS"/>
    <property type="match status" value="1"/>
</dbReference>
<dbReference type="CDD" id="cd07033">
    <property type="entry name" value="TPP_PYR_DXS_TK_like"/>
    <property type="match status" value="1"/>
</dbReference>
<dbReference type="FunFam" id="3.40.50.920:FF:000002">
    <property type="entry name" value="1-deoxy-D-xylulose-5-phosphate synthase"/>
    <property type="match status" value="1"/>
</dbReference>
<dbReference type="FunFam" id="3.40.50.970:FF:000005">
    <property type="entry name" value="1-deoxy-D-xylulose-5-phosphate synthase"/>
    <property type="match status" value="1"/>
</dbReference>
<dbReference type="Gene3D" id="3.40.50.920">
    <property type="match status" value="1"/>
</dbReference>
<dbReference type="Gene3D" id="3.40.50.970">
    <property type="match status" value="2"/>
</dbReference>
<dbReference type="HAMAP" id="MF_00315">
    <property type="entry name" value="DXP_synth"/>
    <property type="match status" value="1"/>
</dbReference>
<dbReference type="InterPro" id="IPR005477">
    <property type="entry name" value="Dxylulose-5-P_synthase"/>
</dbReference>
<dbReference type="InterPro" id="IPR029061">
    <property type="entry name" value="THDP-binding"/>
</dbReference>
<dbReference type="InterPro" id="IPR009014">
    <property type="entry name" value="Transketo_C/PFOR_II"/>
</dbReference>
<dbReference type="InterPro" id="IPR005475">
    <property type="entry name" value="Transketolase-like_Pyr-bd"/>
</dbReference>
<dbReference type="InterPro" id="IPR020826">
    <property type="entry name" value="Transketolase_BS"/>
</dbReference>
<dbReference type="InterPro" id="IPR033248">
    <property type="entry name" value="Transketolase_C"/>
</dbReference>
<dbReference type="InterPro" id="IPR049557">
    <property type="entry name" value="Transketolase_CS"/>
</dbReference>
<dbReference type="NCBIfam" id="TIGR00204">
    <property type="entry name" value="dxs"/>
    <property type="match status" value="1"/>
</dbReference>
<dbReference type="NCBIfam" id="NF003933">
    <property type="entry name" value="PRK05444.2-2"/>
    <property type="match status" value="1"/>
</dbReference>
<dbReference type="PANTHER" id="PTHR43322">
    <property type="entry name" value="1-D-DEOXYXYLULOSE 5-PHOSPHATE SYNTHASE-RELATED"/>
    <property type="match status" value="1"/>
</dbReference>
<dbReference type="PANTHER" id="PTHR43322:SF5">
    <property type="entry name" value="1-DEOXY-D-XYLULOSE-5-PHOSPHATE SYNTHASE, CHLOROPLASTIC"/>
    <property type="match status" value="1"/>
</dbReference>
<dbReference type="Pfam" id="PF13292">
    <property type="entry name" value="DXP_synthase_N"/>
    <property type="match status" value="1"/>
</dbReference>
<dbReference type="Pfam" id="PF02779">
    <property type="entry name" value="Transket_pyr"/>
    <property type="match status" value="1"/>
</dbReference>
<dbReference type="Pfam" id="PF02780">
    <property type="entry name" value="Transketolase_C"/>
    <property type="match status" value="1"/>
</dbReference>
<dbReference type="SMART" id="SM00861">
    <property type="entry name" value="Transket_pyr"/>
    <property type="match status" value="1"/>
</dbReference>
<dbReference type="SUPFAM" id="SSF52518">
    <property type="entry name" value="Thiamin diphosphate-binding fold (THDP-binding)"/>
    <property type="match status" value="2"/>
</dbReference>
<dbReference type="SUPFAM" id="SSF52922">
    <property type="entry name" value="TK C-terminal domain-like"/>
    <property type="match status" value="1"/>
</dbReference>
<dbReference type="PROSITE" id="PS00801">
    <property type="entry name" value="TRANSKETOLASE_1"/>
    <property type="match status" value="1"/>
</dbReference>
<dbReference type="PROSITE" id="PS00802">
    <property type="entry name" value="TRANSKETOLASE_2"/>
    <property type="match status" value="1"/>
</dbReference>
<gene>
    <name evidence="1" type="primary">dxs</name>
    <name type="ordered locus">PM0532</name>
</gene>
<organism>
    <name type="scientific">Pasteurella multocida (strain Pm70)</name>
    <dbReference type="NCBI Taxonomy" id="272843"/>
    <lineage>
        <taxon>Bacteria</taxon>
        <taxon>Pseudomonadati</taxon>
        <taxon>Pseudomonadota</taxon>
        <taxon>Gammaproteobacteria</taxon>
        <taxon>Pasteurellales</taxon>
        <taxon>Pasteurellaceae</taxon>
        <taxon>Pasteurella</taxon>
    </lineage>
</organism>
<sequence length="614" mass="67426">MQNYPLLSLINSPEDLRLLSKEQLPQICQELRAYLLESVSQSSGHLASGLGTVELTVALHYVYKTPFDQLIWDVGHQAYPHKILTGRRDQMSTIRQKNGIHPFPWREESEFDVLSVGHSSTSISAGLGIAVAAQRENAGRKTVCVIGDGAITAGMAFEAMNHAGALHTDMLVILNDNEMSISENVGALNNHLARLLTGSFYSSIREGGKKILSGMPPIKEFVKKTEEHVKGFVSPVGTMFEQLGFNYIGPIDGHNIEELISTLKNMRALKGPQFLHIMTKKGKGYAPAEKDPIGFHGVPKFDHLSGQLPKSNTTPTYSKIFGDWLCEMAENDPKLIGITPAMREGSGMVEFSNRFPQQYFDVAIAEQHAVTFAAGLAIGGYKPVVAIYSTFLQRAYDQVIHDVAIQNLPVLFAIDRAGVVGADGQTHQGAFDISFLRCIPNMVIMTPSDENECRQMLYTGYKLNQPAAVRYPRGNAIGVELTPLTMLALGKSNLIREGEKIAILNFGTLLPTAINVAEKLNATVIDMRFVKPIDVERIHQIAQTHDLIVTLEENVIQGGAGSAVAEVLHSQQHQTKLLQLGLPDFFIPQGTQQEILADLHLDEAGIETQIKNFL</sequence>
<reference key="1">
    <citation type="journal article" date="2001" name="Proc. Natl. Acad. Sci. U.S.A.">
        <title>Complete genomic sequence of Pasteurella multocida Pm70.</title>
        <authorList>
            <person name="May B.J."/>
            <person name="Zhang Q."/>
            <person name="Li L.L."/>
            <person name="Paustian M.L."/>
            <person name="Whittam T.S."/>
            <person name="Kapur V."/>
        </authorList>
    </citation>
    <scope>NUCLEOTIDE SEQUENCE [LARGE SCALE GENOMIC DNA]</scope>
    <source>
        <strain>Pm70</strain>
    </source>
</reference>